<sequence>MTITCSLSDKKCIPCEGGVPPLEKKEIDKLLSELQNEWIVNESGHLYKKYKFPDFMQPIEFANKIAALAEQEVHHPDLTISWGACIVEIWTHKIDGLTESDFILAAKIDLLQN</sequence>
<dbReference type="EC" id="4.2.1.96" evidence="1"/>
<dbReference type="EMBL" id="CP000849">
    <property type="protein sequence ID" value="ABV79865.1"/>
    <property type="molecule type" value="Genomic_DNA"/>
</dbReference>
<dbReference type="RefSeq" id="WP_011478057.1">
    <property type="nucleotide sequence ID" value="NC_009883.1"/>
</dbReference>
<dbReference type="SMR" id="A8GYB5"/>
<dbReference type="KEGG" id="rbo:A1I_07835"/>
<dbReference type="HOGENOM" id="CLU_081974_2_2_5"/>
<dbReference type="GO" id="GO:0008124">
    <property type="term" value="F:4-alpha-hydroxytetrahydrobiopterin dehydratase activity"/>
    <property type="evidence" value="ECO:0007669"/>
    <property type="project" value="UniProtKB-UniRule"/>
</dbReference>
<dbReference type="GO" id="GO:0006729">
    <property type="term" value="P:tetrahydrobiopterin biosynthetic process"/>
    <property type="evidence" value="ECO:0007669"/>
    <property type="project" value="InterPro"/>
</dbReference>
<dbReference type="CDD" id="cd00913">
    <property type="entry name" value="PCD_DCoH_subfamily_a"/>
    <property type="match status" value="1"/>
</dbReference>
<dbReference type="Gene3D" id="3.30.1360.20">
    <property type="entry name" value="Transcriptional coactivator/pterin dehydratase"/>
    <property type="match status" value="1"/>
</dbReference>
<dbReference type="HAMAP" id="MF_00434">
    <property type="entry name" value="Pterin_4_alpha"/>
    <property type="match status" value="1"/>
</dbReference>
<dbReference type="InterPro" id="IPR036428">
    <property type="entry name" value="PCD_sf"/>
</dbReference>
<dbReference type="InterPro" id="IPR001533">
    <property type="entry name" value="Pterin_deHydtase"/>
</dbReference>
<dbReference type="NCBIfam" id="NF002017">
    <property type="entry name" value="PRK00823.1-2"/>
    <property type="match status" value="1"/>
</dbReference>
<dbReference type="PANTHER" id="PTHR12599">
    <property type="entry name" value="PTERIN-4-ALPHA-CARBINOLAMINE DEHYDRATASE"/>
    <property type="match status" value="1"/>
</dbReference>
<dbReference type="PANTHER" id="PTHR12599:SF0">
    <property type="entry name" value="PTERIN-4-ALPHA-CARBINOLAMINE DEHYDRATASE"/>
    <property type="match status" value="1"/>
</dbReference>
<dbReference type="Pfam" id="PF01329">
    <property type="entry name" value="Pterin_4a"/>
    <property type="match status" value="1"/>
</dbReference>
<dbReference type="SUPFAM" id="SSF55248">
    <property type="entry name" value="PCD-like"/>
    <property type="match status" value="1"/>
</dbReference>
<comment type="catalytic activity">
    <reaction evidence="1">
        <text>(4aS,6R)-4a-hydroxy-L-erythro-5,6,7,8-tetrahydrobiopterin = (6R)-L-erythro-6,7-dihydrobiopterin + H2O</text>
        <dbReference type="Rhea" id="RHEA:11920"/>
        <dbReference type="ChEBI" id="CHEBI:15377"/>
        <dbReference type="ChEBI" id="CHEBI:15642"/>
        <dbReference type="ChEBI" id="CHEBI:43120"/>
        <dbReference type="EC" id="4.2.1.96"/>
    </reaction>
</comment>
<comment type="similarity">
    <text evidence="1">Belongs to the pterin-4-alpha-carbinolamine dehydratase family.</text>
</comment>
<accession>A8GYB5</accession>
<protein>
    <recommendedName>
        <fullName evidence="1">Putative pterin-4-alpha-carbinolamine dehydratase</fullName>
        <shortName evidence="1">PHS</shortName>
        <ecNumber evidence="1">4.2.1.96</ecNumber>
    </recommendedName>
    <alternativeName>
        <fullName evidence="1">4-alpha-hydroxy-tetrahydropterin dehydratase</fullName>
    </alternativeName>
    <alternativeName>
        <fullName evidence="1">Pterin carbinolamine dehydratase</fullName>
        <shortName evidence="1">PCD</shortName>
    </alternativeName>
</protein>
<feature type="chain" id="PRO_1000050447" description="Putative pterin-4-alpha-carbinolamine dehydratase">
    <location>
        <begin position="1"/>
        <end position="113"/>
    </location>
</feature>
<keyword id="KW-0456">Lyase</keyword>
<organism>
    <name type="scientific">Rickettsia bellii (strain OSU 85-389)</name>
    <dbReference type="NCBI Taxonomy" id="391896"/>
    <lineage>
        <taxon>Bacteria</taxon>
        <taxon>Pseudomonadati</taxon>
        <taxon>Pseudomonadota</taxon>
        <taxon>Alphaproteobacteria</taxon>
        <taxon>Rickettsiales</taxon>
        <taxon>Rickettsiaceae</taxon>
        <taxon>Rickettsieae</taxon>
        <taxon>Rickettsia</taxon>
        <taxon>belli group</taxon>
    </lineage>
</organism>
<evidence type="ECO:0000255" key="1">
    <source>
        <dbReference type="HAMAP-Rule" id="MF_00434"/>
    </source>
</evidence>
<reference key="1">
    <citation type="submission" date="2007-09" db="EMBL/GenBank/DDBJ databases">
        <title>Complete genome sequencing of Rickettsia bellii.</title>
        <authorList>
            <person name="Madan A."/>
            <person name="Lee H."/>
            <person name="Madan A."/>
            <person name="Yoon J.-G."/>
            <person name="Ryu G.-Y."/>
            <person name="Dasch G."/>
            <person name="Ereemeva M."/>
        </authorList>
    </citation>
    <scope>NUCLEOTIDE SEQUENCE [LARGE SCALE GENOMIC DNA]</scope>
    <source>
        <strain>OSU 85-389</strain>
    </source>
</reference>
<proteinExistence type="inferred from homology"/>
<name>PHS_RICB8</name>
<gene>
    <name type="ordered locus">A1I_07835</name>
</gene>